<gene>
    <name type="primary">TNF</name>
    <name type="synonym">TNFA</name>
    <name type="synonym">TNFSF2</name>
</gene>
<proteinExistence type="evidence at transcript level"/>
<comment type="function">
    <text evidence="2 3">Cytokine that binds to TNFRSF1A/TNFR1 and TNFRSF1B/TNFBR. It is mainly secreted by macrophages and can induce cell death of certain tumor cell lines. It is potent pyrogen causing fever by direct action or by stimulation of interleukin-1 secretion and is implicated in the induction of cachexia, Under certain conditions it can stimulate cell proliferation and induce cell differentiation (By similarity). Induces insulin resistance in adipocytes via inhibition of insulin-induced IRS1 tyrosine phosphorylation and insulin-induced glucose uptake. Induces GKAP42 protein degradation in adipocytes which is partially responsible for TNF-induced insulin resistance (By similarity). Plays a role in angiogenesis by inducing VEGF production synergistically with IL1B and IL6 (By similarity). Promotes osteoclastogenesis and therefore mediates bone resorption (By similarity).</text>
</comment>
<comment type="function">
    <text evidence="2">The TNF intracellular domain (ICD) form induces IL12 production in dendritic cells.</text>
</comment>
<comment type="subunit">
    <text evidence="1">Homotrimer. Interacts with SPPL2B (By similarity).</text>
</comment>
<comment type="subcellular location">
    <subcellularLocation>
        <location evidence="1">Cell membrane</location>
        <topology evidence="1">Single-pass type II membrane protein</topology>
    </subcellularLocation>
</comment>
<comment type="subcellular location">
    <molecule>Tumor necrosis factor, membrane form</molecule>
    <subcellularLocation>
        <location evidence="1">Membrane</location>
        <topology evidence="1">Single-pass type II membrane protein</topology>
    </subcellularLocation>
</comment>
<comment type="subcellular location">
    <molecule>Tumor necrosis factor, soluble form</molecule>
    <subcellularLocation>
        <location evidence="1">Secreted</location>
    </subcellularLocation>
</comment>
<comment type="subcellular location">
    <molecule>C-domain 1</molecule>
    <subcellularLocation>
        <location evidence="1">Secreted</location>
    </subcellularLocation>
</comment>
<comment type="subcellular location">
    <molecule>C-domain 2</molecule>
    <subcellularLocation>
        <location evidence="1">Secreted</location>
    </subcellularLocation>
</comment>
<comment type="PTM">
    <text evidence="1">The soluble form derives from the membrane form by proteolytic processing. The membrane-bound form is further proteolytically processed by SPPL2A or SPPL2B through regulated intramembrane proteolysis producing TNF intracellular domains (ICD1 and ICD2) released in the cytosol and TNF C-domain 1 and C-domain 2 secreted into the extracellular space (By similarity).</text>
</comment>
<comment type="PTM">
    <text evidence="1">The membrane form, but not the soluble form, is phosphorylated on serine residues. Dephosphorylation of the membrane form occurs by binding to soluble TNFRSF1A/TNFR1 (By similarity).</text>
</comment>
<comment type="PTM">
    <text evidence="1">O-glycosylated; glycans contain galactose, N-acetylgalactosamine and N-acetylneuraminic acid.</text>
</comment>
<comment type="PTM">
    <molecule>Tumor necrosis factor, soluble form</molecule>
    <text evidence="2">The soluble form is demyristoylated by SIRT6, promoting its secretion.</text>
</comment>
<comment type="similarity">
    <text evidence="7">Belongs to the tumor necrosis factor family.</text>
</comment>
<reference key="1">
    <citation type="submission" date="2006-04" db="EMBL/GenBank/DDBJ databases">
        <title>Molecular cloning and characterization of cDNA encoding tumor necrosis factor alpha of Boselaphus tragocamelus.</title>
        <authorList>
            <person name="Das D.K."/>
            <person name="Saini M."/>
            <person name="Swarup D."/>
            <person name="Gupta P.K."/>
        </authorList>
    </citation>
    <scope>NUCLEOTIDE SEQUENCE [MRNA]</scope>
</reference>
<sequence>MSTKSMIRDVELAEEVLSEKAGGPQGSRSCLCLSLFSFLLVAGATTLFCLLHFGVIGPQREEQSPAGPSINSPPVQTLRSSSQASSNKPVAHVVADINSPGQLRWWDSYANALMANGVKLKDNQLVVPADGLYLIYSQVLFRDQGCPSTPLFLTHTISRIAVSYQTKVNILSAIKSPCHRETPEWAEAKPWYEPIYQGGVFQLEKGDRLSAEINLPDYLDYAESGQVYFGIIAL</sequence>
<protein>
    <recommendedName>
        <fullName>Tumor necrosis factor</fullName>
    </recommendedName>
    <alternativeName>
        <fullName>Cachectin</fullName>
    </alternativeName>
    <alternativeName>
        <fullName>TNF-alpha</fullName>
    </alternativeName>
    <alternativeName>
        <fullName>Tumor necrosis factor ligand superfamily member 2</fullName>
        <shortName>TNF-a</shortName>
    </alternativeName>
    <component>
        <recommendedName>
            <fullName>Tumor necrosis factor, membrane form</fullName>
        </recommendedName>
        <alternativeName>
            <fullName>N-terminal fragment</fullName>
            <shortName>NTF</shortName>
        </alternativeName>
    </component>
    <component>
        <recommendedName>
            <fullName>Intracellular domain 1</fullName>
            <shortName>ICD1</shortName>
        </recommendedName>
    </component>
    <component>
        <recommendedName>
            <fullName>Intracellular domain 2</fullName>
            <shortName>ICD2</shortName>
        </recommendedName>
    </component>
    <component>
        <recommendedName>
            <fullName>C-domain 1</fullName>
        </recommendedName>
    </component>
    <component>
        <recommendedName>
            <fullName>C-domain 2</fullName>
        </recommendedName>
    </component>
    <component>
        <recommendedName>
            <fullName>Tumor necrosis factor, soluble form</fullName>
        </recommendedName>
    </component>
</protein>
<dbReference type="EMBL" id="DQ508812">
    <property type="protein sequence ID" value="ABF59104.1"/>
    <property type="molecule type" value="mRNA"/>
</dbReference>
<dbReference type="SMR" id="Q1G1A2"/>
<dbReference type="GlyCosmos" id="Q1G1A2">
    <property type="glycosylation" value="1 site, No reported glycans"/>
</dbReference>
<dbReference type="GO" id="GO:0009986">
    <property type="term" value="C:cell surface"/>
    <property type="evidence" value="ECO:0007669"/>
    <property type="project" value="TreeGrafter"/>
</dbReference>
<dbReference type="GO" id="GO:0005615">
    <property type="term" value="C:extracellular space"/>
    <property type="evidence" value="ECO:0007669"/>
    <property type="project" value="UniProtKB-KW"/>
</dbReference>
<dbReference type="GO" id="GO:0005886">
    <property type="term" value="C:plasma membrane"/>
    <property type="evidence" value="ECO:0007669"/>
    <property type="project" value="UniProtKB-SubCell"/>
</dbReference>
<dbReference type="GO" id="GO:0005125">
    <property type="term" value="F:cytokine activity"/>
    <property type="evidence" value="ECO:0007669"/>
    <property type="project" value="UniProtKB-KW"/>
</dbReference>
<dbReference type="GO" id="GO:0005164">
    <property type="term" value="F:tumor necrosis factor receptor binding"/>
    <property type="evidence" value="ECO:0007669"/>
    <property type="project" value="InterPro"/>
</dbReference>
<dbReference type="GO" id="GO:0008625">
    <property type="term" value="P:extrinsic apoptotic signaling pathway via death domain receptors"/>
    <property type="evidence" value="ECO:0007669"/>
    <property type="project" value="TreeGrafter"/>
</dbReference>
<dbReference type="GO" id="GO:0006955">
    <property type="term" value="P:immune response"/>
    <property type="evidence" value="ECO:0007669"/>
    <property type="project" value="InterPro"/>
</dbReference>
<dbReference type="GO" id="GO:0097527">
    <property type="term" value="P:necroptotic signaling pathway"/>
    <property type="evidence" value="ECO:0000250"/>
    <property type="project" value="CAFA"/>
</dbReference>
<dbReference type="GO" id="GO:0043242">
    <property type="term" value="P:negative regulation of protein-containing complex disassembly"/>
    <property type="evidence" value="ECO:0000250"/>
    <property type="project" value="UniProtKB"/>
</dbReference>
<dbReference type="GO" id="GO:0043065">
    <property type="term" value="P:positive regulation of apoptotic process"/>
    <property type="evidence" value="ECO:0000250"/>
    <property type="project" value="UniProtKB"/>
</dbReference>
<dbReference type="GO" id="GO:0043123">
    <property type="term" value="P:positive regulation of canonical NF-kappaB signal transduction"/>
    <property type="evidence" value="ECO:0007669"/>
    <property type="project" value="TreeGrafter"/>
</dbReference>
<dbReference type="GO" id="GO:2001238">
    <property type="term" value="P:positive regulation of extrinsic apoptotic signaling pathway"/>
    <property type="evidence" value="ECO:0007669"/>
    <property type="project" value="TreeGrafter"/>
</dbReference>
<dbReference type="GO" id="GO:0043507">
    <property type="term" value="P:positive regulation of JUN kinase activity"/>
    <property type="evidence" value="ECO:0000250"/>
    <property type="project" value="UniProtKB"/>
</dbReference>
<dbReference type="GO" id="GO:0043406">
    <property type="term" value="P:positive regulation of MAP kinase activity"/>
    <property type="evidence" value="ECO:0000250"/>
    <property type="project" value="UniProtKB"/>
</dbReference>
<dbReference type="GO" id="GO:0051092">
    <property type="term" value="P:positive regulation of NF-kappaB transcription factor activity"/>
    <property type="evidence" value="ECO:0000250"/>
    <property type="project" value="UniProtKB"/>
</dbReference>
<dbReference type="GO" id="GO:0001934">
    <property type="term" value="P:positive regulation of protein phosphorylation"/>
    <property type="evidence" value="ECO:0000250"/>
    <property type="project" value="UniProtKB"/>
</dbReference>
<dbReference type="GO" id="GO:0043243">
    <property type="term" value="P:positive regulation of protein-containing complex disassembly"/>
    <property type="evidence" value="ECO:0000250"/>
    <property type="project" value="UniProtKB"/>
</dbReference>
<dbReference type="GO" id="GO:0045944">
    <property type="term" value="P:positive regulation of transcription by RNA polymerase II"/>
    <property type="evidence" value="ECO:0007669"/>
    <property type="project" value="TreeGrafter"/>
</dbReference>
<dbReference type="GO" id="GO:0065008">
    <property type="term" value="P:regulation of biological quality"/>
    <property type="evidence" value="ECO:0007669"/>
    <property type="project" value="UniProtKB-ARBA"/>
</dbReference>
<dbReference type="GO" id="GO:0050793">
    <property type="term" value="P:regulation of developmental process"/>
    <property type="evidence" value="ECO:0007669"/>
    <property type="project" value="UniProtKB-ARBA"/>
</dbReference>
<dbReference type="GO" id="GO:0051239">
    <property type="term" value="P:regulation of multicellular organismal process"/>
    <property type="evidence" value="ECO:0007669"/>
    <property type="project" value="UniProtKB-ARBA"/>
</dbReference>
<dbReference type="GO" id="GO:0051046">
    <property type="term" value="P:regulation of secretion"/>
    <property type="evidence" value="ECO:0007669"/>
    <property type="project" value="UniProtKB-ARBA"/>
</dbReference>
<dbReference type="GO" id="GO:0033209">
    <property type="term" value="P:tumor necrosis factor-mediated signaling pathway"/>
    <property type="evidence" value="ECO:0007669"/>
    <property type="project" value="TreeGrafter"/>
</dbReference>
<dbReference type="GO" id="GO:0010573">
    <property type="term" value="P:vascular endothelial growth factor production"/>
    <property type="evidence" value="ECO:0000250"/>
    <property type="project" value="UniProtKB"/>
</dbReference>
<dbReference type="CDD" id="cd00184">
    <property type="entry name" value="TNF"/>
    <property type="match status" value="1"/>
</dbReference>
<dbReference type="FunFam" id="2.60.120.40:FF:000007">
    <property type="entry name" value="Tumor necrosis factor"/>
    <property type="match status" value="1"/>
</dbReference>
<dbReference type="Gene3D" id="2.60.120.40">
    <property type="match status" value="1"/>
</dbReference>
<dbReference type="InterPro" id="IPR006053">
    <property type="entry name" value="TNF"/>
</dbReference>
<dbReference type="InterPro" id="IPR002959">
    <property type="entry name" value="TNF_alpha"/>
</dbReference>
<dbReference type="InterPro" id="IPR021184">
    <property type="entry name" value="TNF_CS"/>
</dbReference>
<dbReference type="InterPro" id="IPR006052">
    <property type="entry name" value="TNF_dom"/>
</dbReference>
<dbReference type="InterPro" id="IPR008983">
    <property type="entry name" value="Tumour_necrosis_fac-like_dom"/>
</dbReference>
<dbReference type="PANTHER" id="PTHR11471:SF23">
    <property type="entry name" value="TUMOR NECROSIS FACTOR"/>
    <property type="match status" value="1"/>
</dbReference>
<dbReference type="PANTHER" id="PTHR11471">
    <property type="entry name" value="TUMOR NECROSIS FACTOR FAMILY MEMBER"/>
    <property type="match status" value="1"/>
</dbReference>
<dbReference type="Pfam" id="PF00229">
    <property type="entry name" value="TNF"/>
    <property type="match status" value="1"/>
</dbReference>
<dbReference type="PRINTS" id="PR01234">
    <property type="entry name" value="TNECROSISFCT"/>
</dbReference>
<dbReference type="PRINTS" id="PR01235">
    <property type="entry name" value="TNFALPHA"/>
</dbReference>
<dbReference type="SMART" id="SM00207">
    <property type="entry name" value="TNF"/>
    <property type="match status" value="1"/>
</dbReference>
<dbReference type="SUPFAM" id="SSF49842">
    <property type="entry name" value="TNF-like"/>
    <property type="match status" value="1"/>
</dbReference>
<dbReference type="PROSITE" id="PS00251">
    <property type="entry name" value="THD_1"/>
    <property type="match status" value="1"/>
</dbReference>
<dbReference type="PROSITE" id="PS50049">
    <property type="entry name" value="THD_2"/>
    <property type="match status" value="1"/>
</dbReference>
<accession>Q1G1A2</accession>
<name>TNFA_BOSTR</name>
<organism>
    <name type="scientific">Boselaphus tragocamelus</name>
    <name type="common">Nilgai</name>
    <dbReference type="NCBI Taxonomy" id="9917"/>
    <lineage>
        <taxon>Eukaryota</taxon>
        <taxon>Metazoa</taxon>
        <taxon>Chordata</taxon>
        <taxon>Craniata</taxon>
        <taxon>Vertebrata</taxon>
        <taxon>Euteleostomi</taxon>
        <taxon>Mammalia</taxon>
        <taxon>Eutheria</taxon>
        <taxon>Laurasiatheria</taxon>
        <taxon>Artiodactyla</taxon>
        <taxon>Ruminantia</taxon>
        <taxon>Pecora</taxon>
        <taxon>Bovidae</taxon>
        <taxon>Bovinae</taxon>
        <taxon>Boselaphus</taxon>
    </lineage>
</organism>
<keyword id="KW-1003">Cell membrane</keyword>
<keyword id="KW-0202">Cytokine</keyword>
<keyword id="KW-1015">Disulfide bond</keyword>
<keyword id="KW-0325">Glycoprotein</keyword>
<keyword id="KW-0449">Lipoprotein</keyword>
<keyword id="KW-0472">Membrane</keyword>
<keyword id="KW-0519">Myristate</keyword>
<keyword id="KW-0597">Phosphoprotein</keyword>
<keyword id="KW-0964">Secreted</keyword>
<keyword id="KW-0735">Signal-anchor</keyword>
<keyword id="KW-0812">Transmembrane</keyword>
<keyword id="KW-1133">Transmembrane helix</keyword>
<feature type="chain" id="PRO_0000253489" description="Tumor necrosis factor, membrane form">
    <location>
        <begin position="1"/>
        <end position="234"/>
    </location>
</feature>
<feature type="chain" id="PRO_0000417175" description="Intracellular domain 1" evidence="1">
    <location>
        <begin position="1"/>
        <end position="39"/>
    </location>
</feature>
<feature type="chain" id="PRO_0000417176" description="Intracellular domain 2" evidence="1">
    <location>
        <begin position="1"/>
        <end position="35"/>
    </location>
</feature>
<feature type="chain" id="PRO_0000417177" description="C-domain 1" evidence="1">
    <location>
        <begin position="50"/>
        <end status="unknown"/>
    </location>
</feature>
<feature type="chain" id="PRO_0000417178" description="C-domain 2" evidence="1">
    <location>
        <begin position="52"/>
        <end status="unknown"/>
    </location>
</feature>
<feature type="chain" id="PRO_0000253490" description="Tumor necrosis factor, soluble form" evidence="1">
    <location>
        <begin position="78"/>
        <end position="234"/>
    </location>
</feature>
<feature type="topological domain" description="Cytoplasmic" evidence="4">
    <location>
        <begin position="1"/>
        <end position="33"/>
    </location>
</feature>
<feature type="transmembrane region" description="Helical; Signal-anchor for type II membrane protein" evidence="1">
    <location>
        <begin position="34"/>
        <end position="56"/>
    </location>
</feature>
<feature type="topological domain" description="Extracellular" evidence="4">
    <location>
        <begin position="57"/>
        <end position="234"/>
    </location>
</feature>
<feature type="domain" description="THD" evidence="5">
    <location>
        <begin position="89"/>
        <end position="234"/>
    </location>
</feature>
<feature type="region of interest" description="Disordered" evidence="6">
    <location>
        <begin position="62"/>
        <end position="87"/>
    </location>
</feature>
<feature type="compositionally biased region" description="Polar residues" evidence="6">
    <location>
        <begin position="69"/>
        <end position="87"/>
    </location>
</feature>
<feature type="site" description="Cleavage; by SPPL2A or SPPL2B" evidence="1">
    <location>
        <begin position="34"/>
        <end position="35"/>
    </location>
</feature>
<feature type="site" description="Cleavage; by SPPL2A or SPPL2B" evidence="1">
    <location>
        <begin position="39"/>
        <end position="40"/>
    </location>
</feature>
<feature type="site" description="Cleavage; by SPPL2A or SPPL2B" evidence="1">
    <location>
        <begin position="49"/>
        <end position="50"/>
    </location>
</feature>
<feature type="site" description="Cleavage; by SPPL2A or SPPL2B" evidence="1">
    <location>
        <begin position="51"/>
        <end position="52"/>
    </location>
</feature>
<feature type="site" description="Cleavage; by ADAM17" evidence="1">
    <location>
        <begin position="77"/>
        <end position="78"/>
    </location>
</feature>
<feature type="modified residue" description="Phosphoserine; by CK1" evidence="1">
    <location>
        <position position="2"/>
    </location>
</feature>
<feature type="lipid moiety-binding region" description="N6-myristoyl lysine" evidence="2">
    <location>
        <position position="20"/>
    </location>
</feature>
<feature type="glycosylation site" description="O-linked (GalNAc...) serine; in soluble form" evidence="1">
    <location>
        <position position="81"/>
    </location>
</feature>
<feature type="disulfide bond" evidence="5">
    <location>
        <begin position="146"/>
        <end position="178"/>
    </location>
</feature>
<evidence type="ECO:0000250" key="1"/>
<evidence type="ECO:0000250" key="2">
    <source>
        <dbReference type="UniProtKB" id="P01375"/>
    </source>
</evidence>
<evidence type="ECO:0000250" key="3">
    <source>
        <dbReference type="UniProtKB" id="P06804"/>
    </source>
</evidence>
<evidence type="ECO:0000255" key="4"/>
<evidence type="ECO:0000255" key="5">
    <source>
        <dbReference type="PROSITE-ProRule" id="PRU01387"/>
    </source>
</evidence>
<evidence type="ECO:0000256" key="6">
    <source>
        <dbReference type="SAM" id="MobiDB-lite"/>
    </source>
</evidence>
<evidence type="ECO:0000305" key="7"/>